<sequence length="117" mass="12796">MISIILVMIGGGFGAIARSAITDYFNHKFTSKLPIATLIVNLVGSFLIGLTIGLSISISWFPAFFVTGFLGGLTTFSTLAKELTLMMTPKFNINLFLNYSLLQFIIGFIACYIGYHI</sequence>
<evidence type="ECO:0000255" key="1">
    <source>
        <dbReference type="HAMAP-Rule" id="MF_00454"/>
    </source>
</evidence>
<feature type="chain" id="PRO_0000252945" description="Fluoride-specific ion channel FluC">
    <location>
        <begin position="1"/>
        <end position="117"/>
    </location>
</feature>
<feature type="transmembrane region" description="Helical" evidence="1">
    <location>
        <begin position="1"/>
        <end position="21"/>
    </location>
</feature>
<feature type="transmembrane region" description="Helical" evidence="1">
    <location>
        <begin position="46"/>
        <end position="66"/>
    </location>
</feature>
<feature type="transmembrane region" description="Helical" evidence="1">
    <location>
        <begin position="95"/>
        <end position="115"/>
    </location>
</feature>
<feature type="binding site" evidence="1">
    <location>
        <position position="71"/>
    </location>
    <ligand>
        <name>Na(+)</name>
        <dbReference type="ChEBI" id="CHEBI:29101"/>
        <note>structural</note>
    </ligand>
</feature>
<feature type="binding site" evidence="1">
    <location>
        <position position="74"/>
    </location>
    <ligand>
        <name>Na(+)</name>
        <dbReference type="ChEBI" id="CHEBI:29101"/>
        <note>structural</note>
    </ligand>
</feature>
<keyword id="KW-1003">Cell membrane</keyword>
<keyword id="KW-0407">Ion channel</keyword>
<keyword id="KW-0406">Ion transport</keyword>
<keyword id="KW-0472">Membrane</keyword>
<keyword id="KW-0479">Metal-binding</keyword>
<keyword id="KW-0915">Sodium</keyword>
<keyword id="KW-0812">Transmembrane</keyword>
<keyword id="KW-1133">Transmembrane helix</keyword>
<keyword id="KW-0813">Transport</keyword>
<protein>
    <recommendedName>
        <fullName evidence="1">Fluoride-specific ion channel FluC</fullName>
    </recommendedName>
</protein>
<accession>Q2FFV9</accession>
<organism>
    <name type="scientific">Staphylococcus aureus (strain USA300)</name>
    <dbReference type="NCBI Taxonomy" id="367830"/>
    <lineage>
        <taxon>Bacteria</taxon>
        <taxon>Bacillati</taxon>
        <taxon>Bacillota</taxon>
        <taxon>Bacilli</taxon>
        <taxon>Bacillales</taxon>
        <taxon>Staphylococcaceae</taxon>
        <taxon>Staphylococcus</taxon>
    </lineage>
</organism>
<gene>
    <name evidence="1" type="primary">fluC</name>
    <name evidence="1" type="synonym">crcB</name>
    <name type="ordered locus">SAUSA300_1726</name>
</gene>
<proteinExistence type="inferred from homology"/>
<reference key="1">
    <citation type="journal article" date="2006" name="Lancet">
        <title>Complete genome sequence of USA300, an epidemic clone of community-acquired meticillin-resistant Staphylococcus aureus.</title>
        <authorList>
            <person name="Diep B.A."/>
            <person name="Gill S.R."/>
            <person name="Chang R.F."/>
            <person name="Phan T.H."/>
            <person name="Chen J.H."/>
            <person name="Davidson M.G."/>
            <person name="Lin F."/>
            <person name="Lin J."/>
            <person name="Carleton H.A."/>
            <person name="Mongodin E.F."/>
            <person name="Sensabaugh G.F."/>
            <person name="Perdreau-Remington F."/>
        </authorList>
    </citation>
    <scope>NUCLEOTIDE SEQUENCE [LARGE SCALE GENOMIC DNA]</scope>
    <source>
        <strain>USA300</strain>
    </source>
</reference>
<name>FLUC_STAA3</name>
<dbReference type="EMBL" id="CP000255">
    <property type="protein sequence ID" value="ABD22525.1"/>
    <property type="molecule type" value="Genomic_DNA"/>
</dbReference>
<dbReference type="RefSeq" id="WP_000623471.1">
    <property type="nucleotide sequence ID" value="NZ_CP027476.1"/>
</dbReference>
<dbReference type="SMR" id="Q2FFV9"/>
<dbReference type="KEGG" id="saa:SAUSA300_1726"/>
<dbReference type="HOGENOM" id="CLU_114342_2_3_9"/>
<dbReference type="OMA" id="LFYNHVE"/>
<dbReference type="Proteomes" id="UP000001939">
    <property type="component" value="Chromosome"/>
</dbReference>
<dbReference type="GO" id="GO:0005886">
    <property type="term" value="C:plasma membrane"/>
    <property type="evidence" value="ECO:0007669"/>
    <property type="project" value="UniProtKB-SubCell"/>
</dbReference>
<dbReference type="GO" id="GO:0062054">
    <property type="term" value="F:fluoride channel activity"/>
    <property type="evidence" value="ECO:0007669"/>
    <property type="project" value="UniProtKB-UniRule"/>
</dbReference>
<dbReference type="GO" id="GO:0046872">
    <property type="term" value="F:metal ion binding"/>
    <property type="evidence" value="ECO:0007669"/>
    <property type="project" value="UniProtKB-KW"/>
</dbReference>
<dbReference type="GO" id="GO:0140114">
    <property type="term" value="P:cellular detoxification of fluoride"/>
    <property type="evidence" value="ECO:0007669"/>
    <property type="project" value="UniProtKB-UniRule"/>
</dbReference>
<dbReference type="HAMAP" id="MF_00454">
    <property type="entry name" value="FluC"/>
    <property type="match status" value="1"/>
</dbReference>
<dbReference type="InterPro" id="IPR003691">
    <property type="entry name" value="FluC"/>
</dbReference>
<dbReference type="PANTHER" id="PTHR28259">
    <property type="entry name" value="FLUORIDE EXPORT PROTEIN 1-RELATED"/>
    <property type="match status" value="1"/>
</dbReference>
<dbReference type="PANTHER" id="PTHR28259:SF16">
    <property type="entry name" value="FLUORIDE-SPECIFIC ION CHANNEL FLUC 2"/>
    <property type="match status" value="1"/>
</dbReference>
<dbReference type="Pfam" id="PF02537">
    <property type="entry name" value="CRCB"/>
    <property type="match status" value="1"/>
</dbReference>
<comment type="function">
    <text evidence="1">Fluoride-specific ion channel. Important for reducing fluoride concentration in the cell, thus reducing its toxicity.</text>
</comment>
<comment type="catalytic activity">
    <reaction evidence="1">
        <text>fluoride(in) = fluoride(out)</text>
        <dbReference type="Rhea" id="RHEA:76159"/>
        <dbReference type="ChEBI" id="CHEBI:17051"/>
    </reaction>
    <physiologicalReaction direction="left-to-right" evidence="1">
        <dbReference type="Rhea" id="RHEA:76160"/>
    </physiologicalReaction>
</comment>
<comment type="activity regulation">
    <text evidence="1">Na(+) is not transported, but it plays an essential structural role and its presence is essential for fluoride channel function.</text>
</comment>
<comment type="subcellular location">
    <subcellularLocation>
        <location evidence="1">Cell membrane</location>
        <topology evidence="1">Multi-pass membrane protein</topology>
    </subcellularLocation>
</comment>
<comment type="similarity">
    <text evidence="1">Belongs to the fluoride channel Fluc/FEX (TC 1.A.43) family.</text>
</comment>